<reference key="1">
    <citation type="submission" date="2005-10" db="EMBL/GenBank/DDBJ databases">
        <title>Complete sequence of chromosome 1 of Burkholderia sp. 383.</title>
        <authorList>
            <consortium name="US DOE Joint Genome Institute"/>
            <person name="Copeland A."/>
            <person name="Lucas S."/>
            <person name="Lapidus A."/>
            <person name="Barry K."/>
            <person name="Detter J.C."/>
            <person name="Glavina T."/>
            <person name="Hammon N."/>
            <person name="Israni S."/>
            <person name="Pitluck S."/>
            <person name="Chain P."/>
            <person name="Malfatti S."/>
            <person name="Shin M."/>
            <person name="Vergez L."/>
            <person name="Schmutz J."/>
            <person name="Larimer F."/>
            <person name="Land M."/>
            <person name="Kyrpides N."/>
            <person name="Lykidis A."/>
            <person name="Richardson P."/>
        </authorList>
    </citation>
    <scope>NUCLEOTIDE SEQUENCE [LARGE SCALE GENOMIC DNA]</scope>
    <source>
        <strain>ATCC 17760 / DSM 23089 / LMG 22485 / NCIMB 9086 / R18194 / 383</strain>
    </source>
</reference>
<evidence type="ECO:0000255" key="1">
    <source>
        <dbReference type="HAMAP-Rule" id="MF_00046"/>
    </source>
</evidence>
<protein>
    <recommendedName>
        <fullName evidence="1">UDP-N-acetylmuramate--L-alanine ligase</fullName>
        <ecNumber evidence="1">6.3.2.8</ecNumber>
    </recommendedName>
    <alternativeName>
        <fullName evidence="1">UDP-N-acetylmuramoyl-L-alanine synthetase</fullName>
    </alternativeName>
</protein>
<accession>Q39JW9</accession>
<comment type="function">
    <text evidence="1">Cell wall formation.</text>
</comment>
<comment type="catalytic activity">
    <reaction evidence="1">
        <text>UDP-N-acetyl-alpha-D-muramate + L-alanine + ATP = UDP-N-acetyl-alpha-D-muramoyl-L-alanine + ADP + phosphate + H(+)</text>
        <dbReference type="Rhea" id="RHEA:23372"/>
        <dbReference type="ChEBI" id="CHEBI:15378"/>
        <dbReference type="ChEBI" id="CHEBI:30616"/>
        <dbReference type="ChEBI" id="CHEBI:43474"/>
        <dbReference type="ChEBI" id="CHEBI:57972"/>
        <dbReference type="ChEBI" id="CHEBI:70757"/>
        <dbReference type="ChEBI" id="CHEBI:83898"/>
        <dbReference type="ChEBI" id="CHEBI:456216"/>
        <dbReference type="EC" id="6.3.2.8"/>
    </reaction>
</comment>
<comment type="pathway">
    <text evidence="1">Cell wall biogenesis; peptidoglycan biosynthesis.</text>
</comment>
<comment type="subcellular location">
    <subcellularLocation>
        <location evidence="1">Cytoplasm</location>
    </subcellularLocation>
</comment>
<comment type="similarity">
    <text evidence="1">Belongs to the MurCDEF family.</text>
</comment>
<keyword id="KW-0067">ATP-binding</keyword>
<keyword id="KW-0131">Cell cycle</keyword>
<keyword id="KW-0132">Cell division</keyword>
<keyword id="KW-0133">Cell shape</keyword>
<keyword id="KW-0961">Cell wall biogenesis/degradation</keyword>
<keyword id="KW-0963">Cytoplasm</keyword>
<keyword id="KW-0436">Ligase</keyword>
<keyword id="KW-0547">Nucleotide-binding</keyword>
<keyword id="KW-0573">Peptidoglycan synthesis</keyword>
<name>MURC_BURL3</name>
<dbReference type="EC" id="6.3.2.8" evidence="1"/>
<dbReference type="EMBL" id="CP000151">
    <property type="protein sequence ID" value="ABB07247.1"/>
    <property type="molecule type" value="Genomic_DNA"/>
</dbReference>
<dbReference type="RefSeq" id="WP_011350840.1">
    <property type="nucleotide sequence ID" value="NC_007510.1"/>
</dbReference>
<dbReference type="SMR" id="Q39JW9"/>
<dbReference type="GeneID" id="45093560"/>
<dbReference type="KEGG" id="bur:Bcep18194_A3646"/>
<dbReference type="PATRIC" id="fig|482957.22.peg.500"/>
<dbReference type="HOGENOM" id="CLU_028104_2_2_4"/>
<dbReference type="UniPathway" id="UPA00219"/>
<dbReference type="Proteomes" id="UP000002705">
    <property type="component" value="Chromosome 1"/>
</dbReference>
<dbReference type="GO" id="GO:0005737">
    <property type="term" value="C:cytoplasm"/>
    <property type="evidence" value="ECO:0007669"/>
    <property type="project" value="UniProtKB-SubCell"/>
</dbReference>
<dbReference type="GO" id="GO:0005524">
    <property type="term" value="F:ATP binding"/>
    <property type="evidence" value="ECO:0007669"/>
    <property type="project" value="UniProtKB-UniRule"/>
</dbReference>
<dbReference type="GO" id="GO:0008763">
    <property type="term" value="F:UDP-N-acetylmuramate-L-alanine ligase activity"/>
    <property type="evidence" value="ECO:0007669"/>
    <property type="project" value="UniProtKB-UniRule"/>
</dbReference>
<dbReference type="GO" id="GO:0051301">
    <property type="term" value="P:cell division"/>
    <property type="evidence" value="ECO:0007669"/>
    <property type="project" value="UniProtKB-KW"/>
</dbReference>
<dbReference type="GO" id="GO:0071555">
    <property type="term" value="P:cell wall organization"/>
    <property type="evidence" value="ECO:0007669"/>
    <property type="project" value="UniProtKB-KW"/>
</dbReference>
<dbReference type="GO" id="GO:0009252">
    <property type="term" value="P:peptidoglycan biosynthetic process"/>
    <property type="evidence" value="ECO:0007669"/>
    <property type="project" value="UniProtKB-UniRule"/>
</dbReference>
<dbReference type="GO" id="GO:0008360">
    <property type="term" value="P:regulation of cell shape"/>
    <property type="evidence" value="ECO:0007669"/>
    <property type="project" value="UniProtKB-KW"/>
</dbReference>
<dbReference type="FunFam" id="3.40.1190.10:FF:000001">
    <property type="entry name" value="UDP-N-acetylmuramate--L-alanine ligase"/>
    <property type="match status" value="1"/>
</dbReference>
<dbReference type="Gene3D" id="3.90.190.20">
    <property type="entry name" value="Mur ligase, C-terminal domain"/>
    <property type="match status" value="1"/>
</dbReference>
<dbReference type="Gene3D" id="3.40.1190.10">
    <property type="entry name" value="Mur-like, catalytic domain"/>
    <property type="match status" value="1"/>
</dbReference>
<dbReference type="Gene3D" id="3.40.50.720">
    <property type="entry name" value="NAD(P)-binding Rossmann-like Domain"/>
    <property type="match status" value="1"/>
</dbReference>
<dbReference type="HAMAP" id="MF_00046">
    <property type="entry name" value="MurC"/>
    <property type="match status" value="1"/>
</dbReference>
<dbReference type="InterPro" id="IPR036565">
    <property type="entry name" value="Mur-like_cat_sf"/>
</dbReference>
<dbReference type="InterPro" id="IPR004101">
    <property type="entry name" value="Mur_ligase_C"/>
</dbReference>
<dbReference type="InterPro" id="IPR036615">
    <property type="entry name" value="Mur_ligase_C_dom_sf"/>
</dbReference>
<dbReference type="InterPro" id="IPR013221">
    <property type="entry name" value="Mur_ligase_cen"/>
</dbReference>
<dbReference type="InterPro" id="IPR000713">
    <property type="entry name" value="Mur_ligase_N"/>
</dbReference>
<dbReference type="InterPro" id="IPR050061">
    <property type="entry name" value="MurCDEF_pg_biosynth"/>
</dbReference>
<dbReference type="InterPro" id="IPR005758">
    <property type="entry name" value="UDP-N-AcMur_Ala_ligase_MurC"/>
</dbReference>
<dbReference type="NCBIfam" id="TIGR01082">
    <property type="entry name" value="murC"/>
    <property type="match status" value="1"/>
</dbReference>
<dbReference type="PANTHER" id="PTHR43445:SF3">
    <property type="entry name" value="UDP-N-ACETYLMURAMATE--L-ALANINE LIGASE"/>
    <property type="match status" value="1"/>
</dbReference>
<dbReference type="PANTHER" id="PTHR43445">
    <property type="entry name" value="UDP-N-ACETYLMURAMATE--L-ALANINE LIGASE-RELATED"/>
    <property type="match status" value="1"/>
</dbReference>
<dbReference type="Pfam" id="PF01225">
    <property type="entry name" value="Mur_ligase"/>
    <property type="match status" value="1"/>
</dbReference>
<dbReference type="Pfam" id="PF02875">
    <property type="entry name" value="Mur_ligase_C"/>
    <property type="match status" value="1"/>
</dbReference>
<dbReference type="Pfam" id="PF08245">
    <property type="entry name" value="Mur_ligase_M"/>
    <property type="match status" value="1"/>
</dbReference>
<dbReference type="SUPFAM" id="SSF51984">
    <property type="entry name" value="MurCD N-terminal domain"/>
    <property type="match status" value="1"/>
</dbReference>
<dbReference type="SUPFAM" id="SSF53623">
    <property type="entry name" value="MurD-like peptide ligases, catalytic domain"/>
    <property type="match status" value="1"/>
</dbReference>
<dbReference type="SUPFAM" id="SSF53244">
    <property type="entry name" value="MurD-like peptide ligases, peptide-binding domain"/>
    <property type="match status" value="1"/>
</dbReference>
<organism>
    <name type="scientific">Burkholderia lata (strain ATCC 17760 / DSM 23089 / LMG 22485 / NCIMB 9086 / R18194 / 383)</name>
    <dbReference type="NCBI Taxonomy" id="482957"/>
    <lineage>
        <taxon>Bacteria</taxon>
        <taxon>Pseudomonadati</taxon>
        <taxon>Pseudomonadota</taxon>
        <taxon>Betaproteobacteria</taxon>
        <taxon>Burkholderiales</taxon>
        <taxon>Burkholderiaceae</taxon>
        <taxon>Burkholderia</taxon>
        <taxon>Burkholderia cepacia complex</taxon>
    </lineage>
</organism>
<sequence length="465" mass="49084">MKHIVKHIHFVGIGGAGMSGIAEVLVNLGYEVSGSDLSRNAVTDRLQALGARIAIGHDAVNIEGANAVVVSTAVRSDNPEVLAARAKRVPIVQRAVMLAELMRLKQGIAIAGTHGKTTTTSLVASVLAAGGLDPTFVIGGRLISAGANARLGTGDFIVAEADESDASFLNLYPVIEVITNIDADHMDTYGHDFARLKQAFIEFTQRLPFYGSAVVCVDDPNVRQIIPFISKPVVRYGLSPDAQVRAEDIDARDGRMHFTVIRDGRAPLAVVLNMPGLHNVQNALAAIAIATDLGVSDDAIQLALAEFNGVGRRFQRYGEVPAADGGQYTLIDDYGHHPVEMAATIAAARGAFPGRRLVLAFQPHRYTRTRDCFDDFVNVLSTVDALVLTEVYAAGEAAISTANGDALSRALRTVGKVDPVFVATVDDVPDALAKVAQNGDVVITMGAGSIGGVPAKVAQHTQQKA</sequence>
<proteinExistence type="inferred from homology"/>
<feature type="chain" id="PRO_0000242548" description="UDP-N-acetylmuramate--L-alanine ligase">
    <location>
        <begin position="1"/>
        <end position="465"/>
    </location>
</feature>
<feature type="binding site" evidence="1">
    <location>
        <begin position="112"/>
        <end position="118"/>
    </location>
    <ligand>
        <name>ATP</name>
        <dbReference type="ChEBI" id="CHEBI:30616"/>
    </ligand>
</feature>
<gene>
    <name evidence="1" type="primary">murC</name>
    <name type="ordered locus">Bcep18194_A3646</name>
</gene>